<organism>
    <name type="scientific">Mus musculus</name>
    <name type="common">Mouse</name>
    <dbReference type="NCBI Taxonomy" id="10090"/>
    <lineage>
        <taxon>Eukaryota</taxon>
        <taxon>Metazoa</taxon>
        <taxon>Chordata</taxon>
        <taxon>Craniata</taxon>
        <taxon>Vertebrata</taxon>
        <taxon>Euteleostomi</taxon>
        <taxon>Mammalia</taxon>
        <taxon>Eutheria</taxon>
        <taxon>Euarchontoglires</taxon>
        <taxon>Glires</taxon>
        <taxon>Rodentia</taxon>
        <taxon>Myomorpha</taxon>
        <taxon>Muroidea</taxon>
        <taxon>Muridae</taxon>
        <taxon>Murinae</taxon>
        <taxon>Mus</taxon>
        <taxon>Mus</taxon>
    </lineage>
</organism>
<comment type="function">
    <text evidence="3">A putative DNA-binding regulatory protein associated with meiosis in spermatogenesis.</text>
</comment>
<comment type="subcellular location">
    <subcellularLocation>
        <location evidence="3">Nucleus</location>
    </subcellularLocation>
</comment>
<comment type="tissue specificity">
    <text evidence="3">Predominantly in the spermatocytes and spermatids of testes. It is also expressed in the fetus and embryonic stem cells at lower levels.</text>
</comment>
<comment type="developmental stage">
    <text evidence="3">Detected in the newborn testis and peaks at 3 weeks during the first cycle of spermatogenesis. Expressed in the fetus and embryo.</text>
</comment>
<comment type="similarity">
    <text evidence="4">Belongs to the krueppel C2H2-type zinc-finger protein family.</text>
</comment>
<gene>
    <name type="primary">Zfp41</name>
    <name type="synonym">Zfp-41</name>
</gene>
<keyword id="KW-0217">Developmental protein</keyword>
<keyword id="KW-0221">Differentiation</keyword>
<keyword id="KW-0238">DNA-binding</keyword>
<keyword id="KW-0479">Metal-binding</keyword>
<keyword id="KW-0539">Nucleus</keyword>
<keyword id="KW-1185">Reference proteome</keyword>
<keyword id="KW-0677">Repeat</keyword>
<keyword id="KW-0744">Spermatogenesis</keyword>
<keyword id="KW-0804">Transcription</keyword>
<keyword id="KW-0805">Transcription regulation</keyword>
<keyword id="KW-0862">Zinc</keyword>
<keyword id="KW-0863">Zinc-finger</keyword>
<proteinExistence type="evidence at transcript level"/>
<reference key="1">
    <citation type="journal article" date="2005" name="Science">
        <title>The transcriptional landscape of the mammalian genome.</title>
        <authorList>
            <person name="Carninci P."/>
            <person name="Kasukawa T."/>
            <person name="Katayama S."/>
            <person name="Gough J."/>
            <person name="Frith M.C."/>
            <person name="Maeda N."/>
            <person name="Oyama R."/>
            <person name="Ravasi T."/>
            <person name="Lenhard B."/>
            <person name="Wells C."/>
            <person name="Kodzius R."/>
            <person name="Shimokawa K."/>
            <person name="Bajic V.B."/>
            <person name="Brenner S.E."/>
            <person name="Batalov S."/>
            <person name="Forrest A.R."/>
            <person name="Zavolan M."/>
            <person name="Davis M.J."/>
            <person name="Wilming L.G."/>
            <person name="Aidinis V."/>
            <person name="Allen J.E."/>
            <person name="Ambesi-Impiombato A."/>
            <person name="Apweiler R."/>
            <person name="Aturaliya R.N."/>
            <person name="Bailey T.L."/>
            <person name="Bansal M."/>
            <person name="Baxter L."/>
            <person name="Beisel K.W."/>
            <person name="Bersano T."/>
            <person name="Bono H."/>
            <person name="Chalk A.M."/>
            <person name="Chiu K.P."/>
            <person name="Choudhary V."/>
            <person name="Christoffels A."/>
            <person name="Clutterbuck D.R."/>
            <person name="Crowe M.L."/>
            <person name="Dalla E."/>
            <person name="Dalrymple B.P."/>
            <person name="de Bono B."/>
            <person name="Della Gatta G."/>
            <person name="di Bernardo D."/>
            <person name="Down T."/>
            <person name="Engstrom P."/>
            <person name="Fagiolini M."/>
            <person name="Faulkner G."/>
            <person name="Fletcher C.F."/>
            <person name="Fukushima T."/>
            <person name="Furuno M."/>
            <person name="Futaki S."/>
            <person name="Gariboldi M."/>
            <person name="Georgii-Hemming P."/>
            <person name="Gingeras T.R."/>
            <person name="Gojobori T."/>
            <person name="Green R.E."/>
            <person name="Gustincich S."/>
            <person name="Harbers M."/>
            <person name="Hayashi Y."/>
            <person name="Hensch T.K."/>
            <person name="Hirokawa N."/>
            <person name="Hill D."/>
            <person name="Huminiecki L."/>
            <person name="Iacono M."/>
            <person name="Ikeo K."/>
            <person name="Iwama A."/>
            <person name="Ishikawa T."/>
            <person name="Jakt M."/>
            <person name="Kanapin A."/>
            <person name="Katoh M."/>
            <person name="Kawasawa Y."/>
            <person name="Kelso J."/>
            <person name="Kitamura H."/>
            <person name="Kitano H."/>
            <person name="Kollias G."/>
            <person name="Krishnan S.P."/>
            <person name="Kruger A."/>
            <person name="Kummerfeld S.K."/>
            <person name="Kurochkin I.V."/>
            <person name="Lareau L.F."/>
            <person name="Lazarevic D."/>
            <person name="Lipovich L."/>
            <person name="Liu J."/>
            <person name="Liuni S."/>
            <person name="McWilliam S."/>
            <person name="Madan Babu M."/>
            <person name="Madera M."/>
            <person name="Marchionni L."/>
            <person name="Matsuda H."/>
            <person name="Matsuzawa S."/>
            <person name="Miki H."/>
            <person name="Mignone F."/>
            <person name="Miyake S."/>
            <person name="Morris K."/>
            <person name="Mottagui-Tabar S."/>
            <person name="Mulder N."/>
            <person name="Nakano N."/>
            <person name="Nakauchi H."/>
            <person name="Ng P."/>
            <person name="Nilsson R."/>
            <person name="Nishiguchi S."/>
            <person name="Nishikawa S."/>
            <person name="Nori F."/>
            <person name="Ohara O."/>
            <person name="Okazaki Y."/>
            <person name="Orlando V."/>
            <person name="Pang K.C."/>
            <person name="Pavan W.J."/>
            <person name="Pavesi G."/>
            <person name="Pesole G."/>
            <person name="Petrovsky N."/>
            <person name="Piazza S."/>
            <person name="Reed J."/>
            <person name="Reid J.F."/>
            <person name="Ring B.Z."/>
            <person name="Ringwald M."/>
            <person name="Rost B."/>
            <person name="Ruan Y."/>
            <person name="Salzberg S.L."/>
            <person name="Sandelin A."/>
            <person name="Schneider C."/>
            <person name="Schoenbach C."/>
            <person name="Sekiguchi K."/>
            <person name="Semple C.A."/>
            <person name="Seno S."/>
            <person name="Sessa L."/>
            <person name="Sheng Y."/>
            <person name="Shibata Y."/>
            <person name="Shimada H."/>
            <person name="Shimada K."/>
            <person name="Silva D."/>
            <person name="Sinclair B."/>
            <person name="Sperling S."/>
            <person name="Stupka E."/>
            <person name="Sugiura K."/>
            <person name="Sultana R."/>
            <person name="Takenaka Y."/>
            <person name="Taki K."/>
            <person name="Tammoja K."/>
            <person name="Tan S.L."/>
            <person name="Tang S."/>
            <person name="Taylor M.S."/>
            <person name="Tegner J."/>
            <person name="Teichmann S.A."/>
            <person name="Ueda H.R."/>
            <person name="van Nimwegen E."/>
            <person name="Verardo R."/>
            <person name="Wei C.L."/>
            <person name="Yagi K."/>
            <person name="Yamanishi H."/>
            <person name="Zabarovsky E."/>
            <person name="Zhu S."/>
            <person name="Zimmer A."/>
            <person name="Hide W."/>
            <person name="Bult C."/>
            <person name="Grimmond S.M."/>
            <person name="Teasdale R.D."/>
            <person name="Liu E.T."/>
            <person name="Brusic V."/>
            <person name="Quackenbush J."/>
            <person name="Wahlestedt C."/>
            <person name="Mattick J.S."/>
            <person name="Hume D.A."/>
            <person name="Kai C."/>
            <person name="Sasaki D."/>
            <person name="Tomaru Y."/>
            <person name="Fukuda S."/>
            <person name="Kanamori-Katayama M."/>
            <person name="Suzuki M."/>
            <person name="Aoki J."/>
            <person name="Arakawa T."/>
            <person name="Iida J."/>
            <person name="Imamura K."/>
            <person name="Itoh M."/>
            <person name="Kato T."/>
            <person name="Kawaji H."/>
            <person name="Kawagashira N."/>
            <person name="Kawashima T."/>
            <person name="Kojima M."/>
            <person name="Kondo S."/>
            <person name="Konno H."/>
            <person name="Nakano K."/>
            <person name="Ninomiya N."/>
            <person name="Nishio T."/>
            <person name="Okada M."/>
            <person name="Plessy C."/>
            <person name="Shibata K."/>
            <person name="Shiraki T."/>
            <person name="Suzuki S."/>
            <person name="Tagami M."/>
            <person name="Waki K."/>
            <person name="Watahiki A."/>
            <person name="Okamura-Oho Y."/>
            <person name="Suzuki H."/>
            <person name="Kawai J."/>
            <person name="Hayashizaki Y."/>
        </authorList>
    </citation>
    <scope>NUCLEOTIDE SEQUENCE [LARGE SCALE MRNA]</scope>
    <source>
        <strain>C57BL/6J</strain>
        <tissue>Pituitary</tissue>
    </source>
</reference>
<reference key="2">
    <citation type="journal article" date="2004" name="Genome Res.">
        <title>The status, quality, and expansion of the NIH full-length cDNA project: the Mammalian Gene Collection (MGC).</title>
        <authorList>
            <consortium name="The MGC Project Team"/>
        </authorList>
    </citation>
    <scope>NUCLEOTIDE SEQUENCE [LARGE SCALE MRNA]</scope>
    <source>
        <tissue>Olfactory epithelium</tissue>
    </source>
</reference>
<reference key="3">
    <citation type="journal article" date="1992" name="Dev. Biol.">
        <title>Expression of a mouse zinc finger protein gene in both spermatocytes and oocytes during meiosis.</title>
        <authorList>
            <person name="Noce T."/>
            <person name="Fujiwara Y."/>
            <person name="Sezaki M."/>
            <person name="Fujimoto H."/>
            <person name="Higashinakagawa T."/>
        </authorList>
    </citation>
    <scope>NUCLEOTIDE SEQUENCE [MRNA] OF 89-193</scope>
    <scope>FUNCTION</scope>
    <scope>SUBCELLULAR LOCATION</scope>
    <scope>TISSUE SPECIFICITY</scope>
    <scope>DEVELOPMENTAL STAGE</scope>
    <source>
        <strain>BTBRTF</strain>
        <tissue>Spermatocyte</tissue>
    </source>
</reference>
<sequence length="198" mass="22724">MEKPATRKKKSQAPKEEAGAQKATVKGEKTSKGKKATKKPRKPRRPRKEPVLSPEDEAHIFDAFDASFKDDFEGVPVFVPFQRKKPYECGECGRIFKHKTDHIRHQRVHTGEKPFKCDQCGKTFRHSSDVTKHQRIHTGEKPFKCGECGKAFNCGSNLLKHQKTHTGEKPYGCEECGKSFAYSSCLIRHRKRHPRKKH</sequence>
<accession>Q02526</accession>
<accession>Q8BSV7</accession>
<feature type="chain" id="PRO_0000047299" description="Zinc finger protein 41">
    <location>
        <begin position="1"/>
        <end position="198"/>
    </location>
</feature>
<feature type="zinc finger region" description="C2H2-type 1" evidence="1">
    <location>
        <begin position="87"/>
        <end position="109"/>
    </location>
</feature>
<feature type="zinc finger region" description="C2H2-type 2" evidence="1">
    <location>
        <begin position="115"/>
        <end position="137"/>
    </location>
</feature>
<feature type="zinc finger region" description="C2H2-type 3" evidence="1">
    <location>
        <begin position="143"/>
        <end position="165"/>
    </location>
</feature>
<feature type="zinc finger region" description="C2H2-type 4" evidence="1">
    <location>
        <begin position="171"/>
        <end position="193"/>
    </location>
</feature>
<feature type="region of interest" description="Disordered" evidence="2">
    <location>
        <begin position="1"/>
        <end position="56"/>
    </location>
</feature>
<feature type="compositionally biased region" description="Basic residues" evidence="2">
    <location>
        <begin position="1"/>
        <end position="12"/>
    </location>
</feature>
<feature type="compositionally biased region" description="Basic and acidic residues" evidence="2">
    <location>
        <begin position="13"/>
        <end position="31"/>
    </location>
</feature>
<feature type="compositionally biased region" description="Basic residues" evidence="2">
    <location>
        <begin position="32"/>
        <end position="47"/>
    </location>
</feature>
<protein>
    <recommendedName>
        <fullName>Zinc finger protein 41</fullName>
        <shortName>Zfp-41</shortName>
    </recommendedName>
    <alternativeName>
        <fullName>CtFIN92</fullName>
    </alternativeName>
</protein>
<name>ZFP41_MOUSE</name>
<dbReference type="EMBL" id="AK030420">
    <property type="protein sequence ID" value="BAC26955.1"/>
    <property type="molecule type" value="mRNA"/>
</dbReference>
<dbReference type="EMBL" id="BC053927">
    <property type="protein sequence ID" value="AAH53927.1"/>
    <property type="molecule type" value="mRNA"/>
</dbReference>
<dbReference type="EMBL" id="D10631">
    <property type="protein sequence ID" value="BAA01481.1"/>
    <property type="molecule type" value="mRNA"/>
</dbReference>
<dbReference type="CCDS" id="CCDS37108.1"/>
<dbReference type="PIR" id="B48827">
    <property type="entry name" value="B48827"/>
</dbReference>
<dbReference type="RefSeq" id="NP_001038183.1">
    <property type="nucleotide sequence ID" value="NM_001044718.3"/>
</dbReference>
<dbReference type="RefSeq" id="NP_001403143.1">
    <property type="nucleotide sequence ID" value="NM_001416214.1"/>
</dbReference>
<dbReference type="RefSeq" id="NP_001403144.1">
    <property type="nucleotide sequence ID" value="NM_001416215.1"/>
</dbReference>
<dbReference type="RefSeq" id="NP_001403145.1">
    <property type="nucleotide sequence ID" value="NM_001416216.1"/>
</dbReference>
<dbReference type="RefSeq" id="NP_001403146.1">
    <property type="nucleotide sequence ID" value="NM_001416217.1"/>
</dbReference>
<dbReference type="RefSeq" id="NP_035889.1">
    <property type="nucleotide sequence ID" value="NM_011759.4"/>
</dbReference>
<dbReference type="RefSeq" id="XP_006520957.1">
    <property type="nucleotide sequence ID" value="XM_006520894.3"/>
</dbReference>
<dbReference type="RefSeq" id="XP_006520958.1">
    <property type="nucleotide sequence ID" value="XM_006520895.3"/>
</dbReference>
<dbReference type="RefSeq" id="XP_006520959.1">
    <property type="nucleotide sequence ID" value="XM_006520896.3"/>
</dbReference>
<dbReference type="SMR" id="Q02526"/>
<dbReference type="FunCoup" id="Q02526">
    <property type="interactions" value="74"/>
</dbReference>
<dbReference type="STRING" id="10090.ENSMUSP00000056510"/>
<dbReference type="iPTMnet" id="Q02526"/>
<dbReference type="PhosphoSitePlus" id="Q02526"/>
<dbReference type="jPOST" id="Q02526"/>
<dbReference type="PaxDb" id="10090-ENSMUSP00000056510"/>
<dbReference type="PeptideAtlas" id="Q02526"/>
<dbReference type="ProteomicsDB" id="275149"/>
<dbReference type="DNASU" id="22701"/>
<dbReference type="Ensembl" id="ENSMUST00000054555.10">
    <property type="protein sequence ID" value="ENSMUSP00000056510.8"/>
    <property type="gene ID" value="ENSMUSG00000047003.16"/>
</dbReference>
<dbReference type="Ensembl" id="ENSMUST00000161785.8">
    <property type="protein sequence ID" value="ENSMUSP00000124626.2"/>
    <property type="gene ID" value="ENSMUSG00000047003.16"/>
</dbReference>
<dbReference type="GeneID" id="22701"/>
<dbReference type="KEGG" id="mmu:22701"/>
<dbReference type="UCSC" id="uc007wgx.2">
    <property type="organism name" value="mouse"/>
</dbReference>
<dbReference type="AGR" id="MGI:99186"/>
<dbReference type="CTD" id="286128"/>
<dbReference type="MGI" id="MGI:99186">
    <property type="gene designation" value="Zfp41"/>
</dbReference>
<dbReference type="VEuPathDB" id="HostDB:ENSMUSG00000047003"/>
<dbReference type="eggNOG" id="KOG1721">
    <property type="taxonomic scope" value="Eukaryota"/>
</dbReference>
<dbReference type="GeneTree" id="ENSGT01130000278290"/>
<dbReference type="HOGENOM" id="CLU_002678_2_6_1"/>
<dbReference type="InParanoid" id="Q02526"/>
<dbReference type="OMA" id="QRKKPHE"/>
<dbReference type="OrthoDB" id="427030at2759"/>
<dbReference type="PhylomeDB" id="Q02526"/>
<dbReference type="TreeFam" id="TF337091"/>
<dbReference type="BioGRID-ORCS" id="22701">
    <property type="hits" value="1 hit in 81 CRISPR screens"/>
</dbReference>
<dbReference type="ChiTaRS" id="Zfp41">
    <property type="organism name" value="mouse"/>
</dbReference>
<dbReference type="PRO" id="PR:Q02526"/>
<dbReference type="Proteomes" id="UP000000589">
    <property type="component" value="Chromosome 15"/>
</dbReference>
<dbReference type="RNAct" id="Q02526">
    <property type="molecule type" value="protein"/>
</dbReference>
<dbReference type="Bgee" id="ENSMUSG00000047003">
    <property type="expression patterns" value="Expressed in dorsal pancreas and 187 other cell types or tissues"/>
</dbReference>
<dbReference type="ExpressionAtlas" id="Q02526">
    <property type="expression patterns" value="baseline and differential"/>
</dbReference>
<dbReference type="GO" id="GO:0005634">
    <property type="term" value="C:nucleus"/>
    <property type="evidence" value="ECO:0007669"/>
    <property type="project" value="UniProtKB-SubCell"/>
</dbReference>
<dbReference type="GO" id="GO:1990837">
    <property type="term" value="F:sequence-specific double-stranded DNA binding"/>
    <property type="evidence" value="ECO:0007669"/>
    <property type="project" value="Ensembl"/>
</dbReference>
<dbReference type="GO" id="GO:0008270">
    <property type="term" value="F:zinc ion binding"/>
    <property type="evidence" value="ECO:0007669"/>
    <property type="project" value="UniProtKB-KW"/>
</dbReference>
<dbReference type="GO" id="GO:0030154">
    <property type="term" value="P:cell differentiation"/>
    <property type="evidence" value="ECO:0007669"/>
    <property type="project" value="UniProtKB-KW"/>
</dbReference>
<dbReference type="GO" id="GO:0007283">
    <property type="term" value="P:spermatogenesis"/>
    <property type="evidence" value="ECO:0007669"/>
    <property type="project" value="UniProtKB-KW"/>
</dbReference>
<dbReference type="FunFam" id="3.30.160.60:FF:000303">
    <property type="entry name" value="Zinc finger protein 41"/>
    <property type="match status" value="1"/>
</dbReference>
<dbReference type="FunFam" id="3.30.160.60:FF:001451">
    <property type="entry name" value="zinc finger protein 41 homolog"/>
    <property type="match status" value="1"/>
</dbReference>
<dbReference type="FunFam" id="3.30.160.60:FF:001882">
    <property type="entry name" value="Zinc finger protein 473"/>
    <property type="match status" value="1"/>
</dbReference>
<dbReference type="FunFam" id="3.30.160.60:FF:002090">
    <property type="entry name" value="Zinc finger protein 473"/>
    <property type="match status" value="1"/>
</dbReference>
<dbReference type="Gene3D" id="3.30.160.60">
    <property type="entry name" value="Classic Zinc Finger"/>
    <property type="match status" value="4"/>
</dbReference>
<dbReference type="InterPro" id="IPR036236">
    <property type="entry name" value="Znf_C2H2_sf"/>
</dbReference>
<dbReference type="InterPro" id="IPR013087">
    <property type="entry name" value="Znf_C2H2_type"/>
</dbReference>
<dbReference type="PANTHER" id="PTHR23235">
    <property type="entry name" value="KRUEPPEL-LIKE TRANSCRIPTION FACTOR"/>
    <property type="match status" value="1"/>
</dbReference>
<dbReference type="PANTHER" id="PTHR23235:SF142">
    <property type="entry name" value="ZINC FINGER PROTEIN 384"/>
    <property type="match status" value="1"/>
</dbReference>
<dbReference type="Pfam" id="PF00096">
    <property type="entry name" value="zf-C2H2"/>
    <property type="match status" value="3"/>
</dbReference>
<dbReference type="Pfam" id="PF13894">
    <property type="entry name" value="zf-C2H2_4"/>
    <property type="match status" value="1"/>
</dbReference>
<dbReference type="SMART" id="SM00355">
    <property type="entry name" value="ZnF_C2H2"/>
    <property type="match status" value="4"/>
</dbReference>
<dbReference type="SUPFAM" id="SSF57667">
    <property type="entry name" value="beta-beta-alpha zinc fingers"/>
    <property type="match status" value="2"/>
</dbReference>
<dbReference type="PROSITE" id="PS00028">
    <property type="entry name" value="ZINC_FINGER_C2H2_1"/>
    <property type="match status" value="4"/>
</dbReference>
<dbReference type="PROSITE" id="PS50157">
    <property type="entry name" value="ZINC_FINGER_C2H2_2"/>
    <property type="match status" value="4"/>
</dbReference>
<evidence type="ECO:0000255" key="1">
    <source>
        <dbReference type="PROSITE-ProRule" id="PRU00042"/>
    </source>
</evidence>
<evidence type="ECO:0000256" key="2">
    <source>
        <dbReference type="SAM" id="MobiDB-lite"/>
    </source>
</evidence>
<evidence type="ECO:0000269" key="3">
    <source>
    </source>
</evidence>
<evidence type="ECO:0000305" key="4"/>